<name>CLPC_GUITH</name>
<feature type="chain" id="PRO_0000191217" description="ATP-dependent Clp protease ATP-binding subunit ClpA homolog">
    <location>
        <begin position="1"/>
        <end position="819"/>
    </location>
</feature>
<feature type="domain" description="Clp R" evidence="3">
    <location>
        <begin position="2"/>
        <end position="144"/>
    </location>
</feature>
<feature type="domain" description="UVR" evidence="2">
    <location>
        <begin position="416"/>
        <end position="451"/>
    </location>
</feature>
<feature type="region of interest" description="Repeat 1" evidence="3">
    <location>
        <begin position="5"/>
        <end position="70"/>
    </location>
</feature>
<feature type="region of interest" description="Repeat 2" evidence="3">
    <location>
        <begin position="80"/>
        <end position="144"/>
    </location>
</feature>
<feature type="region of interest" description="I">
    <location>
        <begin position="162"/>
        <end position="409"/>
    </location>
</feature>
<feature type="region of interest" description="II">
    <location>
        <begin position="472"/>
        <end position="663"/>
    </location>
</feature>
<feature type="binding site" evidence="1">
    <location>
        <begin position="207"/>
        <end position="214"/>
    </location>
    <ligand>
        <name>ATP</name>
        <dbReference type="ChEBI" id="CHEBI:30616"/>
    </ligand>
</feature>
<feature type="binding site" evidence="1">
    <location>
        <begin position="546"/>
        <end position="553"/>
    </location>
    <ligand>
        <name>ATP</name>
        <dbReference type="ChEBI" id="CHEBI:30616"/>
    </ligand>
</feature>
<dbReference type="EMBL" id="AF041468">
    <property type="protein sequence ID" value="AAC35595.1"/>
    <property type="molecule type" value="Genomic_DNA"/>
</dbReference>
<dbReference type="RefSeq" id="NP_050661.1">
    <property type="nucleotide sequence ID" value="NC_000926.1"/>
</dbReference>
<dbReference type="SMR" id="O78410"/>
<dbReference type="GeneID" id="856945"/>
<dbReference type="HOGENOM" id="CLU_005070_4_1_1"/>
<dbReference type="OMA" id="KMMCSQL"/>
<dbReference type="GO" id="GO:0009507">
    <property type="term" value="C:chloroplast"/>
    <property type="evidence" value="ECO:0007669"/>
    <property type="project" value="UniProtKB-SubCell"/>
</dbReference>
<dbReference type="GO" id="GO:0005524">
    <property type="term" value="F:ATP binding"/>
    <property type="evidence" value="ECO:0007669"/>
    <property type="project" value="UniProtKB-KW"/>
</dbReference>
<dbReference type="GO" id="GO:0016887">
    <property type="term" value="F:ATP hydrolysis activity"/>
    <property type="evidence" value="ECO:0007669"/>
    <property type="project" value="InterPro"/>
</dbReference>
<dbReference type="GO" id="GO:0034605">
    <property type="term" value="P:cellular response to heat"/>
    <property type="evidence" value="ECO:0007669"/>
    <property type="project" value="TreeGrafter"/>
</dbReference>
<dbReference type="CDD" id="cd00009">
    <property type="entry name" value="AAA"/>
    <property type="match status" value="1"/>
</dbReference>
<dbReference type="CDD" id="cd19499">
    <property type="entry name" value="RecA-like_ClpB_Hsp104-like"/>
    <property type="match status" value="1"/>
</dbReference>
<dbReference type="FunFam" id="1.10.1780.10:FF:000004">
    <property type="entry name" value="ATP-dependent Clp protease ATP-binding subunit ClpC"/>
    <property type="match status" value="1"/>
</dbReference>
<dbReference type="FunFam" id="3.40.50.300:FF:000025">
    <property type="entry name" value="ATP-dependent Clp protease subunit"/>
    <property type="match status" value="1"/>
</dbReference>
<dbReference type="FunFam" id="3.40.50.300:FF:000010">
    <property type="entry name" value="Chaperone clpB 1, putative"/>
    <property type="match status" value="1"/>
</dbReference>
<dbReference type="Gene3D" id="1.10.8.60">
    <property type="match status" value="2"/>
</dbReference>
<dbReference type="Gene3D" id="1.10.1780.10">
    <property type="entry name" value="Clp, N-terminal domain"/>
    <property type="match status" value="1"/>
</dbReference>
<dbReference type="Gene3D" id="3.40.50.300">
    <property type="entry name" value="P-loop containing nucleotide triphosphate hydrolases"/>
    <property type="match status" value="2"/>
</dbReference>
<dbReference type="Gene3D" id="4.10.860.10">
    <property type="entry name" value="UVR domain"/>
    <property type="match status" value="1"/>
</dbReference>
<dbReference type="InterPro" id="IPR003593">
    <property type="entry name" value="AAA+_ATPase"/>
</dbReference>
<dbReference type="InterPro" id="IPR003959">
    <property type="entry name" value="ATPase_AAA_core"/>
</dbReference>
<dbReference type="InterPro" id="IPR019489">
    <property type="entry name" value="Clp_ATPase_C"/>
</dbReference>
<dbReference type="InterPro" id="IPR036628">
    <property type="entry name" value="Clp_N_dom_sf"/>
</dbReference>
<dbReference type="InterPro" id="IPR004176">
    <property type="entry name" value="Clp_R_dom"/>
</dbReference>
<dbReference type="InterPro" id="IPR001270">
    <property type="entry name" value="ClpA/B"/>
</dbReference>
<dbReference type="InterPro" id="IPR018368">
    <property type="entry name" value="ClpA/B_CS1"/>
</dbReference>
<dbReference type="InterPro" id="IPR028299">
    <property type="entry name" value="ClpA/B_CS2"/>
</dbReference>
<dbReference type="InterPro" id="IPR041546">
    <property type="entry name" value="ClpA/ClpB_AAA_lid"/>
</dbReference>
<dbReference type="InterPro" id="IPR050130">
    <property type="entry name" value="ClpA_ClpB"/>
</dbReference>
<dbReference type="InterPro" id="IPR027417">
    <property type="entry name" value="P-loop_NTPase"/>
</dbReference>
<dbReference type="InterPro" id="IPR001943">
    <property type="entry name" value="UVR_dom"/>
</dbReference>
<dbReference type="PANTHER" id="PTHR11638">
    <property type="entry name" value="ATP-DEPENDENT CLP PROTEASE"/>
    <property type="match status" value="1"/>
</dbReference>
<dbReference type="PANTHER" id="PTHR11638:SF155">
    <property type="entry name" value="CHAPERONE PROTEIN CLPC1, CHLOROPLASTIC-LIKE"/>
    <property type="match status" value="1"/>
</dbReference>
<dbReference type="Pfam" id="PF00004">
    <property type="entry name" value="AAA"/>
    <property type="match status" value="1"/>
</dbReference>
<dbReference type="Pfam" id="PF07724">
    <property type="entry name" value="AAA_2"/>
    <property type="match status" value="1"/>
</dbReference>
<dbReference type="Pfam" id="PF17871">
    <property type="entry name" value="AAA_lid_9"/>
    <property type="match status" value="1"/>
</dbReference>
<dbReference type="Pfam" id="PF02861">
    <property type="entry name" value="Clp_N"/>
    <property type="match status" value="2"/>
</dbReference>
<dbReference type="Pfam" id="PF10431">
    <property type="entry name" value="ClpB_D2-small"/>
    <property type="match status" value="1"/>
</dbReference>
<dbReference type="PRINTS" id="PR00300">
    <property type="entry name" value="CLPPROTEASEA"/>
</dbReference>
<dbReference type="SMART" id="SM00382">
    <property type="entry name" value="AAA"/>
    <property type="match status" value="2"/>
</dbReference>
<dbReference type="SMART" id="SM01086">
    <property type="entry name" value="ClpB_D2-small"/>
    <property type="match status" value="1"/>
</dbReference>
<dbReference type="SUPFAM" id="SSF81923">
    <property type="entry name" value="Double Clp-N motif"/>
    <property type="match status" value="1"/>
</dbReference>
<dbReference type="SUPFAM" id="SSF52540">
    <property type="entry name" value="P-loop containing nucleoside triphosphate hydrolases"/>
    <property type="match status" value="2"/>
</dbReference>
<dbReference type="PROSITE" id="PS51903">
    <property type="entry name" value="CLP_R"/>
    <property type="match status" value="1"/>
</dbReference>
<dbReference type="PROSITE" id="PS00870">
    <property type="entry name" value="CLPAB_1"/>
    <property type="match status" value="1"/>
</dbReference>
<dbReference type="PROSITE" id="PS00871">
    <property type="entry name" value="CLPAB_2"/>
    <property type="match status" value="1"/>
</dbReference>
<dbReference type="PROSITE" id="PS50151">
    <property type="entry name" value="UVR"/>
    <property type="match status" value="1"/>
</dbReference>
<sequence length="819" mass="90959">MFERFTEKAIKVIMLAQEEARRLGHNFVGTEQILLGLIGEGTGIAAKVLKSMGVNLKDARVEVEKIIGRGSGFVAVEIPFTPRAKRVLELSLEEARQLGHNYIGTEHLLLGLIREGEGVAARVLENLALDLTKVRTQVIRLLGDTAEVSATNGQTKGKTPTLEEFGSNLTQKAAEGKLDPVIGRQKEIERVIQILGRRTKNNPILIGEPGVGKTAIAEGLAQRINNRDVPDILEDKRVVTLDIGLLVAGTKYRGEFEERLKKIIDEIRVANNVILVIDEVHTLIGAGAAEGAIDAANILKPALARGEMQCIGATTLEEYRKHIEKDSALERRFQPVMVGEPSVEETIEILYGLRDRYEKHHKLVISDEALSAAAKFADQYIADRFLPDKAIDLIDEAGSRVRLMNSQLPPAARELDKELREILKQKDEAVRSQDFETAGQLRDREMEIKAQIAAIAHSKKGDEENTKEVSVVTEEDIAQIVAAWTGIPVNKMTRSESEKLLQMEETLHGRIIGQDEAVVAVSKAIRRARVGLKNPNRPIASFIFSGPTGVGKTELTKALASYFFGSEEAMVRLDMSEYMERHTVSKLIGSPPGYVGYNEGGQLTESVRRRPYTVVLFDEIEKGHPDVFNLLLQILEDGRLTDSKGRTVDFKNTLLILTSNVGSKVIEKGGGGLGFDLSEDQTESQYGRIKALVNEELKQYFRPEFLNRLDEIIVFRQLTKDEVGEIAEIMLKEVFTRISEKGIQLEVTARFKTHLINEGYNPIYGARPLRRAVMRLLEDTLSEEFLAEKIKEGDTAVVDVDDDGKVKVLLGEKLELVAN</sequence>
<comment type="function">
    <text>May interact with a ClpP-like protease involved in degradation of denatured proteins in the chloroplast.</text>
</comment>
<comment type="subcellular location">
    <subcellularLocation>
        <location>Plastid</location>
        <location>Chloroplast</location>
    </subcellularLocation>
</comment>
<comment type="similarity">
    <text evidence="4">Belongs to the ClpA/ClpB family.</text>
</comment>
<geneLocation type="chloroplast"/>
<keyword id="KW-0067">ATP-binding</keyword>
<keyword id="KW-0143">Chaperone</keyword>
<keyword id="KW-0150">Chloroplast</keyword>
<keyword id="KW-0547">Nucleotide-binding</keyword>
<keyword id="KW-0934">Plastid</keyword>
<keyword id="KW-0677">Repeat</keyword>
<proteinExistence type="inferred from homology"/>
<evidence type="ECO:0000255" key="1"/>
<evidence type="ECO:0000255" key="2">
    <source>
        <dbReference type="PROSITE-ProRule" id="PRU00217"/>
    </source>
</evidence>
<evidence type="ECO:0000255" key="3">
    <source>
        <dbReference type="PROSITE-ProRule" id="PRU01251"/>
    </source>
</evidence>
<evidence type="ECO:0000305" key="4"/>
<accession>O78410</accession>
<organism>
    <name type="scientific">Guillardia theta</name>
    <name type="common">Cryptophyte</name>
    <name type="synonym">Cryptomonas phi</name>
    <dbReference type="NCBI Taxonomy" id="55529"/>
    <lineage>
        <taxon>Eukaryota</taxon>
        <taxon>Cryptophyceae</taxon>
        <taxon>Pyrenomonadales</taxon>
        <taxon>Geminigeraceae</taxon>
        <taxon>Guillardia</taxon>
    </lineage>
</organism>
<gene>
    <name type="primary">clpC</name>
</gene>
<protein>
    <recommendedName>
        <fullName>ATP-dependent Clp protease ATP-binding subunit ClpA homolog</fullName>
    </recommendedName>
</protein>
<reference key="1">
    <citation type="journal article" date="1999" name="J. Mol. Evol.">
        <title>The plastid genome of the cryptophyte alga, Guillardia theta: complete sequence and conserved synteny groups confirm its common ancestry with red algae.</title>
        <authorList>
            <person name="Douglas S.E."/>
            <person name="Penny S.L."/>
        </authorList>
    </citation>
    <scope>NUCLEOTIDE SEQUENCE [LARGE SCALE GENOMIC DNA]</scope>
</reference>